<organism>
    <name type="scientific">Mus musculus</name>
    <name type="common">Mouse</name>
    <dbReference type="NCBI Taxonomy" id="10090"/>
    <lineage>
        <taxon>Eukaryota</taxon>
        <taxon>Metazoa</taxon>
        <taxon>Chordata</taxon>
        <taxon>Craniata</taxon>
        <taxon>Vertebrata</taxon>
        <taxon>Euteleostomi</taxon>
        <taxon>Mammalia</taxon>
        <taxon>Eutheria</taxon>
        <taxon>Euarchontoglires</taxon>
        <taxon>Glires</taxon>
        <taxon>Rodentia</taxon>
        <taxon>Myomorpha</taxon>
        <taxon>Muroidea</taxon>
        <taxon>Muridae</taxon>
        <taxon>Murinae</taxon>
        <taxon>Mus</taxon>
        <taxon>Mus</taxon>
    </lineage>
</organism>
<reference key="1">
    <citation type="journal article" date="2000" name="Oncogene">
        <title>SPAK, a STE20/SPS1-related kinase that activates the p38 pathway.</title>
        <authorList>
            <person name="Johnston A.M."/>
            <person name="Naselli G."/>
            <person name="Gonez L.J."/>
            <person name="Martin R.M."/>
            <person name="Harrison L.C."/>
            <person name="de Aizpurua H.J."/>
        </authorList>
    </citation>
    <scope>NUCLEOTIDE SEQUENCE [MRNA]</scope>
    <source>
        <tissue>Brain</tissue>
    </source>
</reference>
<reference key="2">
    <citation type="journal article" date="2004" name="Genome Res.">
        <title>The status, quality, and expansion of the NIH full-length cDNA project: the Mammalian Gene Collection (MGC).</title>
        <authorList>
            <consortium name="The MGC Project Team"/>
        </authorList>
    </citation>
    <scope>NUCLEOTIDE SEQUENCE [LARGE SCALE MRNA]</scope>
    <source>
        <strain>C57BL/6J</strain>
        <tissue>Brain</tissue>
    </source>
</reference>
<reference key="3">
    <citation type="journal article" date="2003" name="J. Biol. Chem.">
        <title>Characterization of the interaction of the stress kinase SPAK with the Na+-K+-2Cl- cotransporter in the nervous system: evidence for a scaffolding role of the kinase.</title>
        <authorList>
            <person name="Piechotta K."/>
            <person name="Garbarini N."/>
            <person name="England R."/>
            <person name="Delpire E."/>
        </authorList>
    </citation>
    <scope>FUNCTION</scope>
</reference>
<reference key="4">
    <citation type="journal article" date="2006" name="Biochem. Biophys. Res. Commun.">
        <title>The TNF receptor, RELT, binds SPAK and uses it to mediate p38 and JNK activation.</title>
        <authorList>
            <person name="Polek T.C."/>
            <person name="Talpaz M."/>
            <person name="Spivak-Kroizman T."/>
        </authorList>
    </citation>
    <scope>FUNCTION</scope>
    <scope>INTERACTION WITH RELT</scope>
    <scope>MUTAGENESIS OF LYS-104 AND THR-243</scope>
    <scope>PHOSPHORYLATION AT THR-243</scope>
</reference>
<reference key="5">
    <citation type="journal article" date="2006" name="Mol. Cell. Biol.">
        <title>Characterization of SPAK and OSR1, regulatory kinases of the Na-K-2Cl cotransporter.</title>
        <authorList>
            <person name="Gagnon K.B."/>
            <person name="England R."/>
            <person name="Delpire E."/>
        </authorList>
    </citation>
    <scope>FUNCTION</scope>
    <scope>CATALYTIC ACTIVITY</scope>
    <scope>COFACTOR</scope>
    <scope>PHOSPHORYLATION AT THR-243 AND THR-247</scope>
    <scope>MUTAGENESIS OF THR-243 AND THR-247</scope>
</reference>
<reference key="6">
    <citation type="journal article" date="2007" name="Cell Metab.">
        <title>Molecular pathogenesis of pseudohypoaldosteronism type II: generation and analysis of a Wnk4(D561A/+) knockin mouse model.</title>
        <authorList>
            <person name="Yang S.S."/>
            <person name="Morimoto T."/>
            <person name="Rai T."/>
            <person name="Chiga M."/>
            <person name="Sohara E."/>
            <person name="Ohno M."/>
            <person name="Uchida K."/>
            <person name="Lin S.H."/>
            <person name="Moriguchi T."/>
            <person name="Shibuya H."/>
            <person name="Kondo Y."/>
            <person name="Sasaki S."/>
            <person name="Uchida S."/>
        </authorList>
    </citation>
    <scope>FUNCTION</scope>
</reference>
<reference key="7">
    <citation type="journal article" date="2009" name="Hum. Mol. Genet.">
        <title>Targeted disruption of the Wnk4 gene decreases phosphorylation of Na-Cl cotransporter, increases Na excretion and lowers blood pressure.</title>
        <authorList>
            <person name="Ohta A."/>
            <person name="Rai T."/>
            <person name="Yui N."/>
            <person name="Chiga M."/>
            <person name="Yang S.S."/>
            <person name="Lin S.H."/>
            <person name="Sohara E."/>
            <person name="Sasaki S."/>
            <person name="Uchida S."/>
        </authorList>
    </citation>
    <scope>FUNCTION</scope>
</reference>
<reference key="8">
    <citation type="journal article" date="2010" name="Cell">
        <title>A tissue-specific atlas of mouse protein phosphorylation and expression.</title>
        <authorList>
            <person name="Huttlin E.L."/>
            <person name="Jedrychowski M.P."/>
            <person name="Elias J.E."/>
            <person name="Goswami T."/>
            <person name="Rad R."/>
            <person name="Beausoleil S.A."/>
            <person name="Villen J."/>
            <person name="Haas W."/>
            <person name="Sowa M.E."/>
            <person name="Gygi S.P."/>
        </authorList>
    </citation>
    <scope>PHOSPHORYLATION [LARGE SCALE ANALYSIS] AT SER-397 AND SER-405</scope>
    <scope>IDENTIFICATION BY MASS SPECTROMETRY [LARGE SCALE ANALYSIS]</scope>
    <source>
        <tissue>Brain</tissue>
        <tissue>Brown adipose tissue</tissue>
        <tissue>Heart</tissue>
        <tissue>Kidney</tissue>
        <tissue>Lung</tissue>
        <tissue>Pancreas</tissue>
        <tissue>Spleen</tissue>
        <tissue>Testis</tissue>
    </source>
</reference>
<reference key="9">
    <citation type="journal article" date="2010" name="Mol. Cell. Biol.">
        <title>SORLA/SORL1 functionally interacts with SPAK to control renal activation of Na(+)-K(+)-Cl(-) cotransporter 2.</title>
        <authorList>
            <person name="Reiche J."/>
            <person name="Theilig F."/>
            <person name="Rafiqi F.H."/>
            <person name="Carlo A.S."/>
            <person name="Militz D."/>
            <person name="Mutig K."/>
            <person name="Todiras M."/>
            <person name="Christensen E.I."/>
            <person name="Ellison D.H."/>
            <person name="Bader M."/>
            <person name="Nykjaer A."/>
            <person name="Bachmann S."/>
            <person name="Alessi D."/>
            <person name="Willnow T.E."/>
        </authorList>
    </citation>
    <scope>TISSUE SPECIFICITY</scope>
</reference>
<reference key="10">
    <citation type="journal article" date="2011" name="J. Biol. Chem.">
        <title>WNK2 is a novel regulator of essential neuronal cation-chloride cotransporters.</title>
        <authorList>
            <person name="Rinehart J."/>
            <person name="Vazquez N."/>
            <person name="Kahle K.T."/>
            <person name="Hodson C.A."/>
            <person name="Ring A.M."/>
            <person name="Gulcicek E.E."/>
            <person name="Louvi A."/>
            <person name="Bobadilla N.A."/>
            <person name="Gamba G."/>
            <person name="Lifton R.P."/>
        </authorList>
    </citation>
    <scope>PHOSPHORYLATION AT THR-366 AND SER-383</scope>
    <scope>INTERACTION WITH WNK2</scope>
</reference>
<reference key="11">
    <citation type="journal article" date="2011" name="J. Cell Sci.">
        <title>Phenotypes of pseudohypoaldosteronism type II caused by the WNK4 D561A missense mutation are dependent on the WNK-OSR1/SPAK kinase cascade.</title>
        <authorList>
            <person name="Chiga M."/>
            <person name="Rafiqi F.H."/>
            <person name="Alessi D.R."/>
            <person name="Sohara E."/>
            <person name="Ohta A."/>
            <person name="Rai T."/>
            <person name="Sasaki S."/>
            <person name="Uchida S."/>
        </authorList>
    </citation>
    <scope>FUNCTION</scope>
    <scope>ACTIVITY REGULATION</scope>
    <scope>PHOSPHORYLATION AT THR-243</scope>
    <scope>MUTAGENESIS OF THR-243</scope>
</reference>
<reference key="12">
    <citation type="journal article" date="2011" name="J. Clin. Invest.">
        <title>IRBIT governs epithelial secretion in mice by antagonizing the WNK/SPAK kinase pathway.</title>
        <authorList>
            <person name="Yang D."/>
            <person name="Li Q."/>
            <person name="So I."/>
            <person name="Huang C.L."/>
            <person name="Ando H."/>
            <person name="Mizutani A."/>
            <person name="Seki G."/>
            <person name="Mikoshiba K."/>
            <person name="Thomas P.J."/>
            <person name="Muallem S."/>
        </authorList>
    </citation>
    <scope>FUNCTION</scope>
</reference>
<reference key="13">
    <citation type="journal article" date="2013" name="Gastroenterology">
        <title>Irbit mediates synergy between ca(2+) and cAMP signaling pathways during epithelial transport in mice.</title>
        <authorList>
            <person name="Park S."/>
            <person name="Shcheynikov N."/>
            <person name="Hong J.H."/>
            <person name="Zheng C."/>
            <person name="Suh S.H."/>
            <person name="Kawaai K."/>
            <person name="Ando H."/>
            <person name="Mizutani A."/>
            <person name="Abe T."/>
            <person name="Kiyonari H."/>
            <person name="Seki G."/>
            <person name="Yule D."/>
            <person name="Mikoshiba K."/>
            <person name="Muallem S."/>
        </authorList>
    </citation>
    <scope>FUNCTION</scope>
</reference>
<gene>
    <name type="primary">Stk39</name>
    <name type="synonym">Spak</name>
</gene>
<feature type="chain" id="PRO_0000086723" description="STE20/SPS1-related proline-alanine-rich protein kinase">
    <location>
        <begin position="1"/>
        <end position="556"/>
    </location>
</feature>
<feature type="domain" description="Protein kinase" evidence="3">
    <location>
        <begin position="75"/>
        <end position="349"/>
    </location>
</feature>
<feature type="region of interest" description="Disordered" evidence="4">
    <location>
        <begin position="1"/>
        <end position="58"/>
    </location>
</feature>
<feature type="region of interest" description="Interaction with RELT" evidence="7">
    <location>
        <begin position="322"/>
        <end position="547"/>
    </location>
</feature>
<feature type="region of interest" description="Disordered" evidence="4">
    <location>
        <begin position="373"/>
        <end position="434"/>
    </location>
</feature>
<feature type="short sequence motif" description="Nuclear localization signal" evidence="2">
    <location>
        <begin position="372"/>
        <end position="378"/>
    </location>
</feature>
<feature type="short sequence motif" description="Caspase cleavage related site">
    <location>
        <begin position="399"/>
        <end position="403"/>
    </location>
</feature>
<feature type="compositionally biased region" description="Low complexity" evidence="4">
    <location>
        <begin position="14"/>
        <end position="35"/>
    </location>
</feature>
<feature type="compositionally biased region" description="Acidic residues" evidence="4">
    <location>
        <begin position="392"/>
        <end position="405"/>
    </location>
</feature>
<feature type="compositionally biased region" description="Basic and acidic residues" evidence="4">
    <location>
        <begin position="415"/>
        <end position="424"/>
    </location>
</feature>
<feature type="active site" description="Proton acceptor" evidence="3">
    <location>
        <position position="204"/>
    </location>
</feature>
<feature type="binding site" evidence="3">
    <location>
        <begin position="81"/>
        <end position="89"/>
    </location>
    <ligand>
        <name>ATP</name>
        <dbReference type="ChEBI" id="CHEBI:30616"/>
    </ligand>
</feature>
<feature type="binding site" evidence="3">
    <location>
        <position position="104"/>
    </location>
    <ligand>
        <name>ATP</name>
        <dbReference type="ChEBI" id="CHEBI:30616"/>
    </ligand>
</feature>
<feature type="modified residue" description="Phosphothreonine; by WNK4" evidence="6 7 12">
    <location>
        <position position="243"/>
    </location>
</feature>
<feature type="modified residue" description="Phosphothreonine" evidence="6">
    <location>
        <position position="247"/>
    </location>
</feature>
<feature type="modified residue" description="Phosphoserine; by PKC/PRKCQ" evidence="1">
    <location>
        <position position="321"/>
    </location>
</feature>
<feature type="modified residue" description="N6-acetyllysine" evidence="1">
    <location>
        <position position="361"/>
    </location>
</feature>
<feature type="modified residue" description="Phosphothreonine" evidence="13">
    <location>
        <position position="366"/>
    </location>
</feature>
<feature type="modified residue" description="Phosphoserine" evidence="1">
    <location>
        <position position="382"/>
    </location>
</feature>
<feature type="modified residue" description="Phosphoserine" evidence="13">
    <location>
        <position position="383"/>
    </location>
</feature>
<feature type="modified residue" description="Phosphoserine" evidence="16">
    <location>
        <position position="397"/>
    </location>
</feature>
<feature type="modified residue" description="Phosphoserine" evidence="16">
    <location>
        <position position="405"/>
    </location>
</feature>
<feature type="mutagenesis site" description="Loss of kinase activity but no loss of interaction with RELT." evidence="7">
    <original>K</original>
    <variation>E</variation>
    <location>
        <position position="104"/>
    </location>
</feature>
<feature type="mutagenesis site" description="Impaired phosphorylation by WNK4 and activation. Abolished ability to activate SLC12A2/NKCC1. Knockin mice are unable to activate SLC12A3/NCC." evidence="6 12">
    <original>T</original>
    <variation>A</variation>
    <location>
        <position position="243"/>
    </location>
</feature>
<feature type="mutagenesis site" description="Increased kinase activity and autophosphorylation." evidence="7">
    <original>T</original>
    <variation>Q</variation>
    <location>
        <position position="243"/>
    </location>
</feature>
<feature type="mutagenesis site" description="Abolished ability to activate SLC12A2/NKCC1." evidence="6">
    <original>T</original>
    <variation>A</variation>
    <location>
        <position position="247"/>
    </location>
</feature>
<feature type="helix" evidence="18">
    <location>
        <begin position="72"/>
        <end position="74"/>
    </location>
</feature>
<feature type="strand" evidence="18">
    <location>
        <begin position="75"/>
        <end position="83"/>
    </location>
</feature>
<feature type="strand" evidence="18">
    <location>
        <begin position="88"/>
        <end position="94"/>
    </location>
</feature>
<feature type="turn" evidence="18">
    <location>
        <begin position="95"/>
        <end position="98"/>
    </location>
</feature>
<feature type="strand" evidence="18">
    <location>
        <begin position="99"/>
        <end position="107"/>
    </location>
</feature>
<feature type="helix" evidence="18">
    <location>
        <begin position="108"/>
        <end position="110"/>
    </location>
</feature>
<feature type="helix" evidence="18">
    <location>
        <begin position="114"/>
        <end position="123"/>
    </location>
</feature>
<feature type="turn" evidence="18">
    <location>
        <begin position="124"/>
        <end position="127"/>
    </location>
</feature>
<feature type="strand" evidence="18">
    <location>
        <begin position="137"/>
        <end position="142"/>
    </location>
</feature>
<feature type="strand" evidence="18">
    <location>
        <begin position="145"/>
        <end position="151"/>
    </location>
</feature>
<feature type="strand" evidence="18">
    <location>
        <begin position="155"/>
        <end position="157"/>
    </location>
</feature>
<feature type="helix" evidence="18">
    <location>
        <begin position="158"/>
        <end position="167"/>
    </location>
</feature>
<feature type="turn" evidence="18">
    <location>
        <begin position="168"/>
        <end position="173"/>
    </location>
</feature>
<feature type="helix" evidence="18">
    <location>
        <begin position="178"/>
        <end position="197"/>
    </location>
</feature>
<feature type="helix" evidence="18">
    <location>
        <begin position="207"/>
        <end position="209"/>
    </location>
</feature>
<feature type="strand" evidence="18">
    <location>
        <begin position="210"/>
        <end position="212"/>
    </location>
</feature>
<feature type="strand" evidence="18">
    <location>
        <begin position="218"/>
        <end position="220"/>
    </location>
</feature>
<feature type="helix" evidence="18">
    <location>
        <begin position="224"/>
        <end position="228"/>
    </location>
</feature>
<feature type="turn" evidence="17">
    <location>
        <begin position="230"/>
        <end position="232"/>
    </location>
</feature>
<feature type="helix" evidence="17">
    <location>
        <begin position="233"/>
        <end position="236"/>
    </location>
</feature>
<feature type="helix" evidence="18">
    <location>
        <begin position="248"/>
        <end position="250"/>
    </location>
</feature>
<feature type="helix" evidence="18">
    <location>
        <begin position="253"/>
        <end position="260"/>
    </location>
</feature>
<feature type="helix" evidence="18">
    <location>
        <begin position="265"/>
        <end position="280"/>
    </location>
</feature>
<feature type="turn" evidence="18">
    <location>
        <begin position="284"/>
        <end position="287"/>
    </location>
</feature>
<feature type="helix" evidence="18">
    <location>
        <begin position="290"/>
        <end position="299"/>
    </location>
</feature>
<feature type="turn" evidence="18">
    <location>
        <begin position="305"/>
        <end position="308"/>
    </location>
</feature>
<feature type="helix" evidence="18">
    <location>
        <begin position="312"/>
        <end position="315"/>
    </location>
</feature>
<feature type="helix" evidence="18">
    <location>
        <begin position="320"/>
        <end position="329"/>
    </location>
</feature>
<feature type="turn" evidence="18">
    <location>
        <begin position="334"/>
        <end position="336"/>
    </location>
</feature>
<feature type="helix" evidence="18">
    <location>
        <begin position="340"/>
        <end position="343"/>
    </location>
</feature>
<feature type="helix" evidence="18">
    <location>
        <begin position="347"/>
        <end position="351"/>
    </location>
</feature>
<feature type="helix" evidence="18">
    <location>
        <begin position="355"/>
        <end position="361"/>
    </location>
</feature>
<feature type="turn" evidence="18">
    <location>
        <begin position="362"/>
        <end position="364"/>
    </location>
</feature>
<keyword id="KW-0002">3D-structure</keyword>
<keyword id="KW-0007">Acetylation</keyword>
<keyword id="KW-0067">ATP-binding</keyword>
<keyword id="KW-0963">Cytoplasm</keyword>
<keyword id="KW-0418">Kinase</keyword>
<keyword id="KW-0547">Nucleotide-binding</keyword>
<keyword id="KW-0539">Nucleus</keyword>
<keyword id="KW-0597">Phosphoprotein</keyword>
<keyword id="KW-1185">Reference proteome</keyword>
<keyword id="KW-0723">Serine/threonine-protein kinase</keyword>
<keyword id="KW-0808">Transferase</keyword>
<name>STK39_MOUSE</name>
<evidence type="ECO:0000250" key="1">
    <source>
        <dbReference type="UniProtKB" id="Q9UEW8"/>
    </source>
</evidence>
<evidence type="ECO:0000255" key="2"/>
<evidence type="ECO:0000255" key="3">
    <source>
        <dbReference type="PROSITE-ProRule" id="PRU00159"/>
    </source>
</evidence>
<evidence type="ECO:0000256" key="4">
    <source>
        <dbReference type="SAM" id="MobiDB-lite"/>
    </source>
</evidence>
<evidence type="ECO:0000269" key="5">
    <source>
    </source>
</evidence>
<evidence type="ECO:0000269" key="6">
    <source>
    </source>
</evidence>
<evidence type="ECO:0000269" key="7">
    <source>
    </source>
</evidence>
<evidence type="ECO:0000269" key="8">
    <source>
    </source>
</evidence>
<evidence type="ECO:0000269" key="9">
    <source>
    </source>
</evidence>
<evidence type="ECO:0000269" key="10">
    <source>
    </source>
</evidence>
<evidence type="ECO:0000269" key="11">
    <source>
    </source>
</evidence>
<evidence type="ECO:0000269" key="12">
    <source>
    </source>
</evidence>
<evidence type="ECO:0000269" key="13">
    <source>
    </source>
</evidence>
<evidence type="ECO:0000269" key="14">
    <source>
    </source>
</evidence>
<evidence type="ECO:0000305" key="15"/>
<evidence type="ECO:0007744" key="16">
    <source>
    </source>
</evidence>
<evidence type="ECO:0007829" key="17">
    <source>
        <dbReference type="PDB" id="5D9H"/>
    </source>
</evidence>
<evidence type="ECO:0007829" key="18">
    <source>
        <dbReference type="PDB" id="5DBX"/>
    </source>
</evidence>
<proteinExistence type="evidence at protein level"/>
<dbReference type="EC" id="2.7.11.1" evidence="6"/>
<dbReference type="EMBL" id="AF099988">
    <property type="protein sequence ID" value="AAC72237.1"/>
    <property type="molecule type" value="mRNA"/>
</dbReference>
<dbReference type="EMBL" id="BC051964">
    <property type="protein sequence ID" value="AAH51964.2"/>
    <property type="molecule type" value="mRNA"/>
</dbReference>
<dbReference type="EMBL" id="BC064443">
    <property type="protein sequence ID" value="AAH64443.1"/>
    <property type="molecule type" value="mRNA"/>
</dbReference>
<dbReference type="CCDS" id="CCDS16084.1"/>
<dbReference type="RefSeq" id="NP_058562.1">
    <property type="nucleotide sequence ID" value="NM_016866.3"/>
</dbReference>
<dbReference type="PDB" id="5D9H">
    <property type="method" value="X-ray"/>
    <property type="resolution" value="3.10 A"/>
    <property type="chains" value="A/B=63-403"/>
</dbReference>
<dbReference type="PDB" id="5DBX">
    <property type="method" value="X-ray"/>
    <property type="resolution" value="2.50 A"/>
    <property type="chains" value="A/B=63-390"/>
</dbReference>
<dbReference type="PDBsum" id="5D9H"/>
<dbReference type="PDBsum" id="5DBX"/>
<dbReference type="SMR" id="Q9Z1W9"/>
<dbReference type="BioGRID" id="207310">
    <property type="interactions" value="6"/>
</dbReference>
<dbReference type="CORUM" id="Q9Z1W9"/>
<dbReference type="DIP" id="DIP-31911N"/>
<dbReference type="ELM" id="Q9Z1W9"/>
<dbReference type="FunCoup" id="Q9Z1W9">
    <property type="interactions" value="1262"/>
</dbReference>
<dbReference type="IntAct" id="Q9Z1W9">
    <property type="interactions" value="12"/>
</dbReference>
<dbReference type="MINT" id="Q9Z1W9"/>
<dbReference type="STRING" id="10090.ENSMUSP00000099776"/>
<dbReference type="GlyGen" id="Q9Z1W9">
    <property type="glycosylation" value="1 site, 1 O-linked glycan (1 site)"/>
</dbReference>
<dbReference type="iPTMnet" id="Q9Z1W9"/>
<dbReference type="PhosphoSitePlus" id="Q9Z1W9"/>
<dbReference type="SwissPalm" id="Q9Z1W9"/>
<dbReference type="jPOST" id="Q9Z1W9"/>
<dbReference type="PaxDb" id="10090-ENSMUSP00000099776"/>
<dbReference type="ProteomicsDB" id="258762"/>
<dbReference type="Pumba" id="Q9Z1W9"/>
<dbReference type="Antibodypedia" id="33792">
    <property type="antibodies" value="803 antibodies from 40 providers"/>
</dbReference>
<dbReference type="DNASU" id="53416"/>
<dbReference type="Ensembl" id="ENSMUST00000102715.4">
    <property type="protein sequence ID" value="ENSMUSP00000099776.4"/>
    <property type="gene ID" value="ENSMUSG00000027030.16"/>
</dbReference>
<dbReference type="GeneID" id="53416"/>
<dbReference type="KEGG" id="mmu:53416"/>
<dbReference type="UCSC" id="uc008jxo.1">
    <property type="organism name" value="mouse"/>
</dbReference>
<dbReference type="AGR" id="MGI:1858416"/>
<dbReference type="CTD" id="27347"/>
<dbReference type="MGI" id="MGI:1858416">
    <property type="gene designation" value="Stk39"/>
</dbReference>
<dbReference type="VEuPathDB" id="HostDB:ENSMUSG00000027030"/>
<dbReference type="eggNOG" id="KOG0582">
    <property type="taxonomic scope" value="Eukaryota"/>
</dbReference>
<dbReference type="GeneTree" id="ENSGT00940000154621"/>
<dbReference type="HOGENOM" id="CLU_000288_111_1_1"/>
<dbReference type="InParanoid" id="Q9Z1W9"/>
<dbReference type="OMA" id="QEVIGHG"/>
<dbReference type="OrthoDB" id="8693905at2759"/>
<dbReference type="PhylomeDB" id="Q9Z1W9"/>
<dbReference type="TreeFam" id="TF105339"/>
<dbReference type="BRENDA" id="2.7.11.1">
    <property type="organism ID" value="3474"/>
</dbReference>
<dbReference type="BioGRID-ORCS" id="53416">
    <property type="hits" value="0 hits in 80 CRISPR screens"/>
</dbReference>
<dbReference type="CD-CODE" id="62836ADF">
    <property type="entry name" value="WNK body"/>
</dbReference>
<dbReference type="ChiTaRS" id="Stk39">
    <property type="organism name" value="mouse"/>
</dbReference>
<dbReference type="EvolutionaryTrace" id="Q9Z1W9"/>
<dbReference type="PRO" id="PR:Q9Z1W9"/>
<dbReference type="Proteomes" id="UP000000589">
    <property type="component" value="Chromosome 2"/>
</dbReference>
<dbReference type="RNAct" id="Q9Z1W9">
    <property type="molecule type" value="protein"/>
</dbReference>
<dbReference type="Bgee" id="ENSMUSG00000027030">
    <property type="expression patterns" value="Expressed in choroid plexus epithelium and 257 other cell types or tissues"/>
</dbReference>
<dbReference type="ExpressionAtlas" id="Q9Z1W9">
    <property type="expression patterns" value="baseline and differential"/>
</dbReference>
<dbReference type="GO" id="GO:0016324">
    <property type="term" value="C:apical plasma membrane"/>
    <property type="evidence" value="ECO:0000314"/>
    <property type="project" value="MGI"/>
</dbReference>
<dbReference type="GO" id="GO:0016323">
    <property type="term" value="C:basolateral plasma membrane"/>
    <property type="evidence" value="ECO:0000314"/>
    <property type="project" value="MGI"/>
</dbReference>
<dbReference type="GO" id="GO:0044297">
    <property type="term" value="C:cell body"/>
    <property type="evidence" value="ECO:0000314"/>
    <property type="project" value="MGI"/>
</dbReference>
<dbReference type="GO" id="GO:0005938">
    <property type="term" value="C:cell cortex"/>
    <property type="evidence" value="ECO:0007669"/>
    <property type="project" value="Ensembl"/>
</dbReference>
<dbReference type="GO" id="GO:0005829">
    <property type="term" value="C:cytosol"/>
    <property type="evidence" value="ECO:0000250"/>
    <property type="project" value="UniProtKB"/>
</dbReference>
<dbReference type="GO" id="GO:0016020">
    <property type="term" value="C:membrane"/>
    <property type="evidence" value="ECO:0000314"/>
    <property type="project" value="MGI"/>
</dbReference>
<dbReference type="GO" id="GO:0005654">
    <property type="term" value="C:nucleoplasm"/>
    <property type="evidence" value="ECO:0007669"/>
    <property type="project" value="Ensembl"/>
</dbReference>
<dbReference type="GO" id="GO:0005524">
    <property type="term" value="F:ATP binding"/>
    <property type="evidence" value="ECO:0007669"/>
    <property type="project" value="UniProtKB-KW"/>
</dbReference>
<dbReference type="GO" id="GO:0016301">
    <property type="term" value="F:kinase activity"/>
    <property type="evidence" value="ECO:0000315"/>
    <property type="project" value="UniProtKB"/>
</dbReference>
<dbReference type="GO" id="GO:0019870">
    <property type="term" value="F:potassium channel inhibitor activity"/>
    <property type="evidence" value="ECO:0007669"/>
    <property type="project" value="Ensembl"/>
</dbReference>
<dbReference type="GO" id="GO:0004672">
    <property type="term" value="F:protein kinase activity"/>
    <property type="evidence" value="ECO:0000314"/>
    <property type="project" value="MGI"/>
</dbReference>
<dbReference type="GO" id="GO:0019901">
    <property type="term" value="F:protein kinase binding"/>
    <property type="evidence" value="ECO:0007669"/>
    <property type="project" value="Ensembl"/>
</dbReference>
<dbReference type="GO" id="GO:0106310">
    <property type="term" value="F:protein serine kinase activity"/>
    <property type="evidence" value="ECO:0007669"/>
    <property type="project" value="RHEA"/>
</dbReference>
<dbReference type="GO" id="GO:0004674">
    <property type="term" value="F:protein serine/threonine kinase activity"/>
    <property type="evidence" value="ECO:0000315"/>
    <property type="project" value="ARUK-UCL"/>
</dbReference>
<dbReference type="GO" id="GO:0044325">
    <property type="term" value="F:transmembrane transporter binding"/>
    <property type="evidence" value="ECO:0000353"/>
    <property type="project" value="ARUK-UCL"/>
</dbReference>
<dbReference type="GO" id="GO:0141109">
    <property type="term" value="F:transporter activator activity"/>
    <property type="evidence" value="ECO:0007669"/>
    <property type="project" value="Ensembl"/>
</dbReference>
<dbReference type="GO" id="GO:0006884">
    <property type="term" value="P:cell volume homeostasis"/>
    <property type="evidence" value="ECO:0007669"/>
    <property type="project" value="Ensembl"/>
</dbReference>
<dbReference type="GO" id="GO:0071474">
    <property type="term" value="P:cellular hyperosmotic response"/>
    <property type="evidence" value="ECO:0007669"/>
    <property type="project" value="Ensembl"/>
</dbReference>
<dbReference type="GO" id="GO:0071476">
    <property type="term" value="P:cellular hypotonic response"/>
    <property type="evidence" value="ECO:0000316"/>
    <property type="project" value="ParkinsonsUK-UCL"/>
</dbReference>
<dbReference type="GO" id="GO:0035865">
    <property type="term" value="P:cellular response to potassium ion"/>
    <property type="evidence" value="ECO:0000314"/>
    <property type="project" value="MGI"/>
</dbReference>
<dbReference type="GO" id="GO:0038146">
    <property type="term" value="P:chemokine (C-X-C motif) ligand 12 signaling pathway"/>
    <property type="evidence" value="ECO:0007669"/>
    <property type="project" value="Ensembl"/>
</dbReference>
<dbReference type="GO" id="GO:0006954">
    <property type="term" value="P:inflammatory response"/>
    <property type="evidence" value="ECO:0000315"/>
    <property type="project" value="MGI"/>
</dbReference>
<dbReference type="GO" id="GO:0030644">
    <property type="term" value="P:intracellular chloride ion homeostasis"/>
    <property type="evidence" value="ECO:0000316"/>
    <property type="project" value="MGI"/>
</dbReference>
<dbReference type="GO" id="GO:0035556">
    <property type="term" value="P:intracellular signal transduction"/>
    <property type="evidence" value="ECO:0000316"/>
    <property type="project" value="ParkinsonsUK-UCL"/>
</dbReference>
<dbReference type="GO" id="GO:0042116">
    <property type="term" value="P:macrophage activation"/>
    <property type="evidence" value="ECO:0000315"/>
    <property type="project" value="MGI"/>
</dbReference>
<dbReference type="GO" id="GO:0036438">
    <property type="term" value="P:maintenance of lens transparency"/>
    <property type="evidence" value="ECO:0000315"/>
    <property type="project" value="ParkinsonsUK-UCL"/>
</dbReference>
<dbReference type="GO" id="GO:0050801">
    <property type="term" value="P:monoatomic ion homeostasis"/>
    <property type="evidence" value="ECO:0000315"/>
    <property type="project" value="MGI"/>
</dbReference>
<dbReference type="GO" id="GO:0090188">
    <property type="term" value="P:negative regulation of pancreatic juice secretion"/>
    <property type="evidence" value="ECO:0000315"/>
    <property type="project" value="UniProtKB"/>
</dbReference>
<dbReference type="GO" id="GO:1901380">
    <property type="term" value="P:negative regulation of potassium ion transmembrane transport"/>
    <property type="evidence" value="ECO:0000316"/>
    <property type="project" value="ParkinsonsUK-UCL"/>
</dbReference>
<dbReference type="GO" id="GO:0018107">
    <property type="term" value="P:peptidyl-threonine phosphorylation"/>
    <property type="evidence" value="ECO:0000250"/>
    <property type="project" value="UniProtKB"/>
</dbReference>
<dbReference type="GO" id="GO:1900745">
    <property type="term" value="P:positive regulation of p38MAPK cascade"/>
    <property type="evidence" value="ECO:0000250"/>
    <property type="project" value="UniProtKB"/>
</dbReference>
<dbReference type="GO" id="GO:1903288">
    <property type="term" value="P:positive regulation of potassium ion import across plasma membrane"/>
    <property type="evidence" value="ECO:0007669"/>
    <property type="project" value="Ensembl"/>
</dbReference>
<dbReference type="GO" id="GO:1903784">
    <property type="term" value="P:positive regulation of sodium ion import across plasma membrane"/>
    <property type="evidence" value="ECO:0007669"/>
    <property type="project" value="Ensembl"/>
</dbReference>
<dbReference type="GO" id="GO:0010820">
    <property type="term" value="P:positive regulation of T cell chemotaxis"/>
    <property type="evidence" value="ECO:0007669"/>
    <property type="project" value="Ensembl"/>
</dbReference>
<dbReference type="GO" id="GO:0046777">
    <property type="term" value="P:protein autophosphorylation"/>
    <property type="evidence" value="ECO:0000315"/>
    <property type="project" value="UniProtKB"/>
</dbReference>
<dbReference type="GO" id="GO:0006468">
    <property type="term" value="P:protein phosphorylation"/>
    <property type="evidence" value="ECO:0000315"/>
    <property type="project" value="UniProtKB"/>
</dbReference>
<dbReference type="GO" id="GO:0008217">
    <property type="term" value="P:regulation of blood pressure"/>
    <property type="evidence" value="ECO:0000315"/>
    <property type="project" value="MGI"/>
</dbReference>
<dbReference type="GO" id="GO:0050727">
    <property type="term" value="P:regulation of inflammatory response"/>
    <property type="evidence" value="ECO:0000314"/>
    <property type="project" value="MGI"/>
</dbReference>
<dbReference type="GO" id="GO:1904062">
    <property type="term" value="P:regulation of monoatomic cation transmembrane transport"/>
    <property type="evidence" value="ECO:0000315"/>
    <property type="project" value="ARUK-UCL"/>
</dbReference>
<dbReference type="GO" id="GO:0070294">
    <property type="term" value="P:renal sodium ion absorption"/>
    <property type="evidence" value="ECO:0007669"/>
    <property type="project" value="Ensembl"/>
</dbReference>
<dbReference type="GO" id="GO:1904044">
    <property type="term" value="P:response to aldosterone"/>
    <property type="evidence" value="ECO:0000316"/>
    <property type="project" value="MGI"/>
</dbReference>
<dbReference type="GO" id="GO:0002021">
    <property type="term" value="P:response to dietary excess"/>
    <property type="evidence" value="ECO:0000315"/>
    <property type="project" value="MGI"/>
</dbReference>
<dbReference type="GO" id="GO:0035725">
    <property type="term" value="P:sodium ion transmembrane transport"/>
    <property type="evidence" value="ECO:0000315"/>
    <property type="project" value="MGI"/>
</dbReference>
<dbReference type="CDD" id="cd06610">
    <property type="entry name" value="STKc_OSR1_SPAK"/>
    <property type="match status" value="1"/>
</dbReference>
<dbReference type="FunFam" id="3.10.20.90:FF:000043">
    <property type="entry name" value="serine/threonine-protein kinase OSR1 isoform X1"/>
    <property type="match status" value="1"/>
</dbReference>
<dbReference type="FunFam" id="3.30.200.20:FF:000114">
    <property type="entry name" value="serine/threonine-protein kinase OSR1 isoform X1"/>
    <property type="match status" value="1"/>
</dbReference>
<dbReference type="FunFam" id="1.10.510.10:FF:000068">
    <property type="entry name" value="STE20/SPS1-related proline-alanine-rich protein kinase"/>
    <property type="match status" value="1"/>
</dbReference>
<dbReference type="Gene3D" id="3.10.20.90">
    <property type="entry name" value="Phosphatidylinositol 3-kinase Catalytic Subunit, Chain A, domain 1"/>
    <property type="match status" value="1"/>
</dbReference>
<dbReference type="Gene3D" id="3.30.200.20">
    <property type="entry name" value="Phosphorylase Kinase, domain 1"/>
    <property type="match status" value="1"/>
</dbReference>
<dbReference type="Gene3D" id="1.10.510.10">
    <property type="entry name" value="Transferase(Phosphotransferase) domain 1"/>
    <property type="match status" value="1"/>
</dbReference>
<dbReference type="InterPro" id="IPR011009">
    <property type="entry name" value="Kinase-like_dom_sf"/>
</dbReference>
<dbReference type="InterPro" id="IPR024678">
    <property type="entry name" value="Kinase_OSR1/WNK_CCT"/>
</dbReference>
<dbReference type="InterPro" id="IPR000719">
    <property type="entry name" value="Prot_kinase_dom"/>
</dbReference>
<dbReference type="InterPro" id="IPR017441">
    <property type="entry name" value="Protein_kinase_ATP_BS"/>
</dbReference>
<dbReference type="InterPro" id="IPR050629">
    <property type="entry name" value="STE20/SPS1-PAK"/>
</dbReference>
<dbReference type="PANTHER" id="PTHR48012:SF14">
    <property type="entry name" value="STE20_SPS1-RELATED PROLINE-ALANINE-RICH PROTEIN KINASE"/>
    <property type="match status" value="1"/>
</dbReference>
<dbReference type="PANTHER" id="PTHR48012">
    <property type="entry name" value="STERILE20-LIKE KINASE, ISOFORM B-RELATED"/>
    <property type="match status" value="1"/>
</dbReference>
<dbReference type="Pfam" id="PF12202">
    <property type="entry name" value="OSR1_C"/>
    <property type="match status" value="1"/>
</dbReference>
<dbReference type="Pfam" id="PF00069">
    <property type="entry name" value="Pkinase"/>
    <property type="match status" value="1"/>
</dbReference>
<dbReference type="SMART" id="SM00220">
    <property type="entry name" value="S_TKc"/>
    <property type="match status" value="1"/>
</dbReference>
<dbReference type="SUPFAM" id="SSF56112">
    <property type="entry name" value="Protein kinase-like (PK-like)"/>
    <property type="match status" value="1"/>
</dbReference>
<dbReference type="PROSITE" id="PS00107">
    <property type="entry name" value="PROTEIN_KINASE_ATP"/>
    <property type="match status" value="1"/>
</dbReference>
<dbReference type="PROSITE" id="PS50011">
    <property type="entry name" value="PROTEIN_KINASE_DOM"/>
    <property type="match status" value="1"/>
</dbReference>
<protein>
    <recommendedName>
        <fullName>STE20/SPS1-related proline-alanine-rich protein kinase</fullName>
        <shortName>Ste-20-related kinase</shortName>
        <ecNumber evidence="6">2.7.11.1</ecNumber>
    </recommendedName>
    <alternativeName>
        <fullName>Serine/threonine-protein kinase 39</fullName>
    </alternativeName>
</protein>
<accession>Q9Z1W9</accession>
<accession>Q80W13</accession>
<comment type="function">
    <text evidence="1 5 6 7 8 9 11 12 14">Effector serine/threonine-protein kinase component of the WNK-SPAK/OSR1 kinase cascade, which is involved in various processes, such as ion transport, response to hypertonic stress and blood pressure (PubMed:16382158, PubMed:17488636, PubMed:19633012, PubMed:21486947). Specifically recognizes and binds proteins with a RFXV motif (PubMed:14563843). Acts downstream of WNK kinases (WNK1, WNK2, WNK3 or WNK4): following activation by WNK kinases, catalyzes phosphorylation of ion cotransporters, such as SLC12A1/NKCC2, SLC12A2/NKCC1, SLC12A3/NCC, SLC12A5/KCC2 or SLC12A6/KCC3, regulating their activity (PubMed:14563843, PubMed:16382158, PubMed:17488636, PubMed:19633012, PubMed:21486947). Mediates regulatory volume increase in response to hyperosmotic stress by catalyzing phosphorylation of ion cotransporters SLC12A1/NKCC2, SLC12A2/NKCC1 and SLC12A6/KCC3 downstream of WNK1 and WNK3 kinases (By similarity). Phosphorylation of Na-K-Cl cotransporters SLC12A2/NKCC1 and SLC12A2/NKCC1 promote their activation and ion influx; simultaneously, phosphorylation of K-Cl cotransporters SLC12A5/KCC2 and SLC12A6/KCC3 inhibit their activity, blocking ion efflux (By similarity). Acts as a regulator of NaCl reabsorption in the distal nephron by mediating phosphorylation and activation of the thiazide-sensitive Na-Cl cotransporter SLC12A3/NCC in distal convoluted tubule cells of kidney downstream of WNK4 (PubMed:17488636, PubMed:19633012, PubMed:21486947). Mediates the inhibition of SLC4A4, SLC26A6 as well as CFTR activities (PubMed:21317537, PubMed:23542070). Phosphorylates RELT (PubMed:16530727).</text>
</comment>
<comment type="catalytic activity">
    <reaction evidence="6">
        <text>L-seryl-[protein] + ATP = O-phospho-L-seryl-[protein] + ADP + H(+)</text>
        <dbReference type="Rhea" id="RHEA:17989"/>
        <dbReference type="Rhea" id="RHEA-COMP:9863"/>
        <dbReference type="Rhea" id="RHEA-COMP:11604"/>
        <dbReference type="ChEBI" id="CHEBI:15378"/>
        <dbReference type="ChEBI" id="CHEBI:29999"/>
        <dbReference type="ChEBI" id="CHEBI:30616"/>
        <dbReference type="ChEBI" id="CHEBI:83421"/>
        <dbReference type="ChEBI" id="CHEBI:456216"/>
        <dbReference type="EC" id="2.7.11.1"/>
    </reaction>
</comment>
<comment type="catalytic activity">
    <reaction evidence="6">
        <text>L-threonyl-[protein] + ATP = O-phospho-L-threonyl-[protein] + ADP + H(+)</text>
        <dbReference type="Rhea" id="RHEA:46608"/>
        <dbReference type="Rhea" id="RHEA-COMP:11060"/>
        <dbReference type="Rhea" id="RHEA-COMP:11605"/>
        <dbReference type="ChEBI" id="CHEBI:15378"/>
        <dbReference type="ChEBI" id="CHEBI:30013"/>
        <dbReference type="ChEBI" id="CHEBI:30616"/>
        <dbReference type="ChEBI" id="CHEBI:61977"/>
        <dbReference type="ChEBI" id="CHEBI:456216"/>
        <dbReference type="EC" id="2.7.11.1"/>
    </reaction>
</comment>
<comment type="cofactor">
    <cofactor evidence="6">
        <name>Mn(2+)</name>
        <dbReference type="ChEBI" id="CHEBI:29035"/>
    </cofactor>
</comment>
<comment type="activity regulation">
    <text evidence="12">Activated following phosphorylation at Thr-243 by WNK kinases (WNK1, WNK2, WNK3 or WNK4).</text>
</comment>
<comment type="subunit">
    <text evidence="1 7 13">The phosphorylated form forms a complex with WNK2 (PubMed:21733846). Interacts with RELT (PubMed:16530727). Interacts with SORL1 (via cytosolic C-terminus) (By similarity).</text>
</comment>
<comment type="interaction">
    <interactant intactId="EBI-444764">
        <id>Q9Z1W9</id>
    </interactant>
    <interactant intactId="EBI-298727">
        <id>P47811</id>
        <label>Mapk14</label>
    </interactant>
    <organismsDiffer>false</organismsDiffer>
    <experiments>2</experiments>
</comment>
<comment type="interaction">
    <interactant intactId="EBI-444764">
        <id>Q9Z1W9</id>
    </interactant>
    <interactant intactId="EBI-621078">
        <id>P55012</id>
        <label>Slc12a2</label>
    </interactant>
    <organismsDiffer>false</organismsDiffer>
    <experiments>3</experiments>
</comment>
<comment type="interaction">
    <interactant intactId="EBI-444764">
        <id>Q9Z1W9</id>
    </interactant>
    <interactant intactId="EBI-620992">
        <id>Q924N4-1</id>
        <label>Slc12a6</label>
    </interactant>
    <organismsDiffer>false</organismsDiffer>
    <experiments>4</experiments>
</comment>
<comment type="subcellular location">
    <subcellularLocation>
        <location evidence="15">Cytoplasm</location>
    </subcellularLocation>
    <subcellularLocation>
        <location evidence="15">Nucleus</location>
    </subcellularLocation>
    <text evidence="15">Nucleus when caspase-cleaved.</text>
</comment>
<comment type="tissue specificity">
    <text evidence="10">Expressed in the kidney, including in epithelial cells of the thick ascending limb of Henle's loop and in the distal convoluted tubule (at protein level).</text>
</comment>
<comment type="domain">
    <text evidence="1">PAPA box (proline-alanine repeats) may target the kinase to a specific subcellular location by facilitating interaction with intracellular proteins such as actin or actin-like proteins.</text>
</comment>
<comment type="PTM">
    <text evidence="6 7 12 13">Phosphorylation at Thr-243 by WNK kinases (WNK1, WNK2, WNK3 or WNK4) is required for activation (PubMed:16382158, PubMed:21486947). Autophosphorylation at Thr-243 positively regulates its activity (PubMed:16530727). Phosphorylated at Ser-321 by PRKCQ (PubMed:21733846).</text>
</comment>
<comment type="similarity">
    <text evidence="15">Belongs to the protein kinase superfamily. STE Ser/Thr protein kinase family. STE20 subfamily.</text>
</comment>
<sequence>MAEPSGSPVHVQLSQQAAPVTAAAATAPAAATSAPAPAPAPAPAASAAPAPAPAAAPAPAPAAQAVGWPICRDAYELQEVIGSGATAVVQAALCKPRQERVAIKRINLEKCQTSMDELLKEIQAMSQCSHPNVVTYYTSFVVKDELWLVMKLLSGGSMLDIIKYIVNRGEHKNGVLEEAIIATILKEVLEGLDYLHRNGQIHRDLKAGNILLGEDGSVQIADFGVSAFLATGGDVTRNKVRKTFVGTPCWMAPEVMEQVRGYDFKADMWSFGITAIELATGAAPYHKYPPMKVLMLTLQNDPPTLETGVEDKEMMKKYGKSFRKLLSLCLQKDPSKRPTAAELLKCKFFQKAKNREYLIEKLLTRTPDIAQRAKKVRRVPGSSGHLHKTEDGDWEWSDDEMDEKSEEGKAAASQEKSRRVKEENSEISVNAGGIPEQIQSLSVHDSQAQPNANEDYREGPCAVNLVLRLRNSRKELNDIRFEFTPGRDTADGVSQELFSAGLVDGHDVVIVAANLQKIVDDPKALKTLTFKLASGCDGSEIPDEVKLIGFAQLSVS</sequence>